<protein>
    <recommendedName>
        <fullName evidence="1">Photosystem II reaction center protein L</fullName>
        <shortName evidence="1">PSII-L</shortName>
    </recommendedName>
</protein>
<geneLocation type="chloroplast"/>
<sequence>MTQTNPNEQSVELNRTSLYWGLLLIFVLAVLFSNYFFN</sequence>
<gene>
    <name evidence="1" type="primary">psbL</name>
</gene>
<keyword id="KW-0150">Chloroplast</keyword>
<keyword id="KW-0472">Membrane</keyword>
<keyword id="KW-0602">Photosynthesis</keyword>
<keyword id="KW-0604">Photosystem II</keyword>
<keyword id="KW-0934">Plastid</keyword>
<keyword id="KW-0674">Reaction center</keyword>
<keyword id="KW-0793">Thylakoid</keyword>
<keyword id="KW-0812">Transmembrane</keyword>
<keyword id="KW-1133">Transmembrane helix</keyword>
<reference key="1">
    <citation type="journal article" date="2007" name="Mol. Biol. Evol.">
        <title>Chloroplast genome (cpDNA) of Cycas taitungensis and 56 cp protein-coding genes of Gnetum parvifolium: insights into cpDNA evolution and phylogeny of extant seed plants.</title>
        <authorList>
            <person name="Wu C.-S."/>
            <person name="Wang Y.-N."/>
            <person name="Liu S.-M."/>
            <person name="Chaw S.-M."/>
        </authorList>
    </citation>
    <scope>NUCLEOTIDE SEQUENCE [LARGE SCALE GENOMIC DNA]</scope>
</reference>
<reference key="2">
    <citation type="journal article" date="2009" name="Mol. Phylogenet. Evol.">
        <title>Evolution of reduced and compact chloroplast genomes (cpDNAs) in gnetophytes: Selection toward a lower-cost strategy.</title>
        <authorList>
            <person name="Wu C.-S."/>
            <person name="Lai Y.-T."/>
            <person name="Lin C.-P."/>
            <person name="Wang Y.-N."/>
            <person name="Chaw S.-M."/>
        </authorList>
    </citation>
    <scope>NUCLEOTIDE SEQUENCE [LARGE SCALE GENOMIC DNA]</scope>
</reference>
<feature type="chain" id="PRO_0000306234" description="Photosystem II reaction center protein L">
    <location>
        <begin position="1"/>
        <end position="38"/>
    </location>
</feature>
<feature type="transmembrane region" description="Helical" evidence="1">
    <location>
        <begin position="17"/>
        <end position="37"/>
    </location>
</feature>
<organism>
    <name type="scientific">Gnetum parvifolium</name>
    <name type="common">Small-leaved jointfir</name>
    <name type="synonym">Gnetum scandens var. parvifolium</name>
    <dbReference type="NCBI Taxonomy" id="33153"/>
    <lineage>
        <taxon>Eukaryota</taxon>
        <taxon>Viridiplantae</taxon>
        <taxon>Streptophyta</taxon>
        <taxon>Embryophyta</taxon>
        <taxon>Tracheophyta</taxon>
        <taxon>Spermatophyta</taxon>
        <taxon>Gnetopsida</taxon>
        <taxon>Gnetidae</taxon>
        <taxon>Gnetales</taxon>
        <taxon>Gnetaceae</taxon>
        <taxon>Gnetum</taxon>
    </lineage>
</organism>
<accession>A6BM37</accession>
<accession>B7ZI99</accession>
<dbReference type="EMBL" id="AB295933">
    <property type="protein sequence ID" value="BAF64882.1"/>
    <property type="molecule type" value="Genomic_DNA"/>
</dbReference>
<dbReference type="EMBL" id="AP009569">
    <property type="protein sequence ID" value="BAH11279.1"/>
    <property type="molecule type" value="Genomic_DNA"/>
</dbReference>
<dbReference type="RefSeq" id="YP_002519768.1">
    <property type="nucleotide sequence ID" value="NC_011942.1"/>
</dbReference>
<dbReference type="SMR" id="A6BM37"/>
<dbReference type="GeneID" id="7368158"/>
<dbReference type="GO" id="GO:0009535">
    <property type="term" value="C:chloroplast thylakoid membrane"/>
    <property type="evidence" value="ECO:0007669"/>
    <property type="project" value="UniProtKB-SubCell"/>
</dbReference>
<dbReference type="GO" id="GO:0009539">
    <property type="term" value="C:photosystem II reaction center"/>
    <property type="evidence" value="ECO:0007669"/>
    <property type="project" value="InterPro"/>
</dbReference>
<dbReference type="GO" id="GO:0015979">
    <property type="term" value="P:photosynthesis"/>
    <property type="evidence" value="ECO:0007669"/>
    <property type="project" value="UniProtKB-UniRule"/>
</dbReference>
<dbReference type="HAMAP" id="MF_01317">
    <property type="entry name" value="PSII_PsbL"/>
    <property type="match status" value="1"/>
</dbReference>
<dbReference type="InterPro" id="IPR003372">
    <property type="entry name" value="PSII_PsbL"/>
</dbReference>
<dbReference type="InterPro" id="IPR037266">
    <property type="entry name" value="PSII_PsbL_sf"/>
</dbReference>
<dbReference type="NCBIfam" id="NF001972">
    <property type="entry name" value="PRK00753.1"/>
    <property type="match status" value="1"/>
</dbReference>
<dbReference type="Pfam" id="PF02419">
    <property type="entry name" value="PsbL"/>
    <property type="match status" value="1"/>
</dbReference>
<dbReference type="SUPFAM" id="SSF161017">
    <property type="entry name" value="Photosystem II reaction center protein L, PsbL"/>
    <property type="match status" value="1"/>
</dbReference>
<proteinExistence type="inferred from homology"/>
<evidence type="ECO:0000255" key="1">
    <source>
        <dbReference type="HAMAP-Rule" id="MF_01317"/>
    </source>
</evidence>
<comment type="function">
    <text evidence="1">One of the components of the core complex of photosystem II (PSII). PSII is a light-driven water:plastoquinone oxidoreductase that uses light energy to abstract electrons from H(2)O, generating O(2) and a proton gradient subsequently used for ATP formation. It consists of a core antenna complex that captures photons, and an electron transfer chain that converts photonic excitation into a charge separation. This subunit is found at the monomer-monomer interface and is required for correct PSII assembly and/or dimerization.</text>
</comment>
<comment type="subunit">
    <text evidence="1">PSII is composed of 1 copy each of membrane proteins PsbA, PsbB, PsbC, PsbD, PsbE, PsbF, PsbH, PsbI, PsbJ, PsbK, PsbL, PsbM, PsbT, PsbX, PsbY, PsbZ, Psb30/Ycf12, at least 3 peripheral proteins of the oxygen-evolving complex and a large number of cofactors. It forms dimeric complexes.</text>
</comment>
<comment type="subcellular location">
    <subcellularLocation>
        <location evidence="1">Plastid</location>
        <location evidence="1">Chloroplast thylakoid membrane</location>
        <topology evidence="1">Single-pass membrane protein</topology>
    </subcellularLocation>
</comment>
<comment type="similarity">
    <text evidence="1">Belongs to the PsbL family.</text>
</comment>
<name>PSBL_GNEPA</name>